<keyword id="KW-1185">Reference proteome</keyword>
<keyword id="KW-0687">Ribonucleoprotein</keyword>
<keyword id="KW-0689">Ribosomal protein</keyword>
<dbReference type="EMBL" id="AAFI02000026">
    <property type="protein sequence ID" value="EAL67952.1"/>
    <property type="molecule type" value="Genomic_DNA"/>
</dbReference>
<dbReference type="RefSeq" id="XP_641946.1">
    <property type="nucleotide sequence ID" value="XM_636854.1"/>
</dbReference>
<dbReference type="SMR" id="Q54XB5"/>
<dbReference type="FunCoup" id="Q54XB5">
    <property type="interactions" value="535"/>
</dbReference>
<dbReference type="STRING" id="44689.Q54XB5"/>
<dbReference type="PaxDb" id="44689-DDB0231149"/>
<dbReference type="EnsemblProtists" id="EAL67952">
    <property type="protein sequence ID" value="EAL67952"/>
    <property type="gene ID" value="DDB_G0279061"/>
</dbReference>
<dbReference type="GeneID" id="8621860"/>
<dbReference type="KEGG" id="ddi:DDB_G0279061"/>
<dbReference type="dictyBase" id="DDB_G0279061">
    <property type="gene designation" value="rpl31"/>
</dbReference>
<dbReference type="VEuPathDB" id="AmoebaDB:DDB_G0279061"/>
<dbReference type="eggNOG" id="KOG0893">
    <property type="taxonomic scope" value="Eukaryota"/>
</dbReference>
<dbReference type="HOGENOM" id="CLU_112570_1_1_1"/>
<dbReference type="InParanoid" id="Q54XB5"/>
<dbReference type="OMA" id="EVWKQGI"/>
<dbReference type="PhylomeDB" id="Q54XB5"/>
<dbReference type="Reactome" id="R-DDI-156827">
    <property type="pathway name" value="L13a-mediated translational silencing of Ceruloplasmin expression"/>
</dbReference>
<dbReference type="Reactome" id="R-DDI-1799339">
    <property type="pathway name" value="SRP-dependent cotranslational protein targeting to membrane"/>
</dbReference>
<dbReference type="Reactome" id="R-DDI-72689">
    <property type="pathway name" value="Formation of a pool of free 40S subunits"/>
</dbReference>
<dbReference type="Reactome" id="R-DDI-72706">
    <property type="pathway name" value="GTP hydrolysis and joining of the 60S ribosomal subunit"/>
</dbReference>
<dbReference type="Reactome" id="R-DDI-975956">
    <property type="pathway name" value="Nonsense Mediated Decay (NMD) independent of the Exon Junction Complex (EJC)"/>
</dbReference>
<dbReference type="Reactome" id="R-DDI-975957">
    <property type="pathway name" value="Nonsense Mediated Decay (NMD) enhanced by the Exon Junction Complex (EJC)"/>
</dbReference>
<dbReference type="PRO" id="PR:Q54XB5"/>
<dbReference type="Proteomes" id="UP000002195">
    <property type="component" value="Chromosome 3"/>
</dbReference>
<dbReference type="GO" id="GO:0022625">
    <property type="term" value="C:cytosolic large ribosomal subunit"/>
    <property type="evidence" value="ECO:0000318"/>
    <property type="project" value="GO_Central"/>
</dbReference>
<dbReference type="GO" id="GO:0003735">
    <property type="term" value="F:structural constituent of ribosome"/>
    <property type="evidence" value="ECO:0000250"/>
    <property type="project" value="dictyBase"/>
</dbReference>
<dbReference type="GO" id="GO:0002181">
    <property type="term" value="P:cytoplasmic translation"/>
    <property type="evidence" value="ECO:0000318"/>
    <property type="project" value="GO_Central"/>
</dbReference>
<dbReference type="GO" id="GO:0006412">
    <property type="term" value="P:translation"/>
    <property type="evidence" value="ECO:0000250"/>
    <property type="project" value="dictyBase"/>
</dbReference>
<dbReference type="CDD" id="cd00463">
    <property type="entry name" value="Ribosomal_L31e"/>
    <property type="match status" value="1"/>
</dbReference>
<dbReference type="FunFam" id="3.10.440.10:FF:000001">
    <property type="entry name" value="60S ribosomal protein L31"/>
    <property type="match status" value="1"/>
</dbReference>
<dbReference type="Gene3D" id="3.10.440.10">
    <property type="match status" value="1"/>
</dbReference>
<dbReference type="InterPro" id="IPR000054">
    <property type="entry name" value="Ribosomal_eL31"/>
</dbReference>
<dbReference type="InterPro" id="IPR020052">
    <property type="entry name" value="Ribosomal_eL31_CS"/>
</dbReference>
<dbReference type="InterPro" id="IPR023621">
    <property type="entry name" value="Ribosomal_eL31_dom_sf"/>
</dbReference>
<dbReference type="PANTHER" id="PTHR10956">
    <property type="entry name" value="60S RIBOSOMAL PROTEIN L31"/>
    <property type="match status" value="1"/>
</dbReference>
<dbReference type="PANTHER" id="PTHR10956:SF0">
    <property type="entry name" value="60S RIBOSOMAL PROTEIN L31"/>
    <property type="match status" value="1"/>
</dbReference>
<dbReference type="Pfam" id="PF01198">
    <property type="entry name" value="Ribosomal_L31e"/>
    <property type="match status" value="1"/>
</dbReference>
<dbReference type="SMART" id="SM01380">
    <property type="entry name" value="Ribosomal_L31e"/>
    <property type="match status" value="1"/>
</dbReference>
<dbReference type="SUPFAM" id="SSF54575">
    <property type="entry name" value="Ribosomal protein L31e"/>
    <property type="match status" value="1"/>
</dbReference>
<dbReference type="PROSITE" id="PS01144">
    <property type="entry name" value="RIBOSOMAL_L31E"/>
    <property type="match status" value="1"/>
</dbReference>
<gene>
    <name type="primary">rpl31</name>
    <name type="ORF">DDB_G0279061</name>
</gene>
<reference key="1">
    <citation type="journal article" date="2005" name="Nature">
        <title>The genome of the social amoeba Dictyostelium discoideum.</title>
        <authorList>
            <person name="Eichinger L."/>
            <person name="Pachebat J.A."/>
            <person name="Gloeckner G."/>
            <person name="Rajandream M.A."/>
            <person name="Sucgang R."/>
            <person name="Berriman M."/>
            <person name="Song J."/>
            <person name="Olsen R."/>
            <person name="Szafranski K."/>
            <person name="Xu Q."/>
            <person name="Tunggal B."/>
            <person name="Kummerfeld S."/>
            <person name="Madera M."/>
            <person name="Konfortov B.A."/>
            <person name="Rivero F."/>
            <person name="Bankier A.T."/>
            <person name="Lehmann R."/>
            <person name="Hamlin N."/>
            <person name="Davies R."/>
            <person name="Gaudet P."/>
            <person name="Fey P."/>
            <person name="Pilcher K."/>
            <person name="Chen G."/>
            <person name="Saunders D."/>
            <person name="Sodergren E.J."/>
            <person name="Davis P."/>
            <person name="Kerhornou A."/>
            <person name="Nie X."/>
            <person name="Hall N."/>
            <person name="Anjard C."/>
            <person name="Hemphill L."/>
            <person name="Bason N."/>
            <person name="Farbrother P."/>
            <person name="Desany B."/>
            <person name="Just E."/>
            <person name="Morio T."/>
            <person name="Rost R."/>
            <person name="Churcher C.M."/>
            <person name="Cooper J."/>
            <person name="Haydock S."/>
            <person name="van Driessche N."/>
            <person name="Cronin A."/>
            <person name="Goodhead I."/>
            <person name="Muzny D.M."/>
            <person name="Mourier T."/>
            <person name="Pain A."/>
            <person name="Lu M."/>
            <person name="Harper D."/>
            <person name="Lindsay R."/>
            <person name="Hauser H."/>
            <person name="James K.D."/>
            <person name="Quiles M."/>
            <person name="Madan Babu M."/>
            <person name="Saito T."/>
            <person name="Buchrieser C."/>
            <person name="Wardroper A."/>
            <person name="Felder M."/>
            <person name="Thangavelu M."/>
            <person name="Johnson D."/>
            <person name="Knights A."/>
            <person name="Loulseged H."/>
            <person name="Mungall K.L."/>
            <person name="Oliver K."/>
            <person name="Price C."/>
            <person name="Quail M.A."/>
            <person name="Urushihara H."/>
            <person name="Hernandez J."/>
            <person name="Rabbinowitsch E."/>
            <person name="Steffen D."/>
            <person name="Sanders M."/>
            <person name="Ma J."/>
            <person name="Kohara Y."/>
            <person name="Sharp S."/>
            <person name="Simmonds M.N."/>
            <person name="Spiegler S."/>
            <person name="Tivey A."/>
            <person name="Sugano S."/>
            <person name="White B."/>
            <person name="Walker D."/>
            <person name="Woodward J.R."/>
            <person name="Winckler T."/>
            <person name="Tanaka Y."/>
            <person name="Shaulsky G."/>
            <person name="Schleicher M."/>
            <person name="Weinstock G.M."/>
            <person name="Rosenthal A."/>
            <person name="Cox E.C."/>
            <person name="Chisholm R.L."/>
            <person name="Gibbs R.A."/>
            <person name="Loomis W.F."/>
            <person name="Platzer M."/>
            <person name="Kay R.R."/>
            <person name="Williams J.G."/>
            <person name="Dear P.H."/>
            <person name="Noegel A.A."/>
            <person name="Barrell B.G."/>
            <person name="Kuspa A."/>
        </authorList>
    </citation>
    <scope>NUCLEOTIDE SEQUENCE [LARGE SCALE GENOMIC DNA]</scope>
    <source>
        <strain>AX4</strain>
    </source>
</reference>
<name>RL31_DICDI</name>
<proteinExistence type="inferred from homology"/>
<organism>
    <name type="scientific">Dictyostelium discoideum</name>
    <name type="common">Social amoeba</name>
    <dbReference type="NCBI Taxonomy" id="44689"/>
    <lineage>
        <taxon>Eukaryota</taxon>
        <taxon>Amoebozoa</taxon>
        <taxon>Evosea</taxon>
        <taxon>Eumycetozoa</taxon>
        <taxon>Dictyostelia</taxon>
        <taxon>Dictyosteliales</taxon>
        <taxon>Dictyosteliaceae</taxon>
        <taxon>Dictyostelium</taxon>
    </lineage>
</organism>
<comment type="similarity">
    <text evidence="1">Belongs to the eukaryotic ribosomal protein eL31 family.</text>
</comment>
<accession>Q54XB5</accession>
<feature type="chain" id="PRO_0000323437" description="Large ribosomal subunit protein eL31">
    <location>
        <begin position="1"/>
        <end position="111"/>
    </location>
</feature>
<evidence type="ECO:0000305" key="1"/>
<protein>
    <recommendedName>
        <fullName evidence="1">Large ribosomal subunit protein eL31</fullName>
    </recommendedName>
    <alternativeName>
        <fullName>60S ribosomal protein L31</fullName>
    </alternativeName>
</protein>
<sequence length="111" mass="12766">MSSSEAVTREYTINLHKRLYGTTFKDRAPKAVKQVKLFAQKIMGTKDVRIDNKLNKFLWSQGIKNVPHRVRVTLSRKRNEDENATEKLYTVASLVIVKSFKGLQTKKVADN</sequence>